<name>APOE_THEGE</name>
<comment type="function">
    <text evidence="1">APOE is an apolipoprotein, a protein associating with lipid particles, that mainly functions in lipoprotein-mediated lipid transport between organs via the plasma and interstitial fluids. APOE is a core component of plasma lipoproteins and is involved in their production, conversion and clearance. Apolipoproteins are amphipathic molecules that interact both with lipids of the lipoprotein particle core and the aqueous environment of the plasma. As such, APOE associates with chylomicrons, chylomicron remnants, very low density lipoproteins (VLDL) and intermediate density lipoproteins (IDL) but shows a preferential binding to high-density lipoproteins (HDL). It also binds a wide range of cellular receptors including the LDL receptor/LDLR, the LDL receptor-related proteins LRP1, LRP2 and LRP8 and the very low-density lipoprotein receptor/VLDLR that mediate the cellular uptake of the APOE-containing lipoprotein particles. Finally, APOE also has a heparin-binding activity and binds heparan-sulfate proteoglycans on the surface of cells, a property that supports the capture and the receptor-mediated uptake of APOE-containing lipoproteins by cells. A main function of APOE is to mediate lipoprotein clearance through the uptake of chylomicrons, VLDLs, and HDLs by hepatocytes. APOE is also involved in the biosynthesis by the liver of VLDLs as well as their uptake by peripheral tissues ensuring the delivery of triglycerides and energy storage in muscle, heart and adipose tissues. By participating in the lipoprotein-mediated distribution of lipids among tissues, APOE plays a critical role in plasma and tissues lipid homeostasis. APOE is also involved in two steps of reverse cholesterol transport, the HDLs-mediated transport of cholesterol from peripheral tissues to the liver, and thereby plays an important role in cholesterol homeostasis. First, it is functionally associated with ABCA1 in the biogenesis of HDLs in tissues. Second, it is enriched in circulating HDLs and mediates their uptake by hepatocytes. APOE also plays an important role in lipid transport in the central nervous system, regulating neuron survival and sprouting.</text>
</comment>
<comment type="subunit">
    <text evidence="1">Homotetramer. May interact with ABCA1; functionally associated with ABCA1 in the biogenesis of HDLs. May interact with APP/A4 amyloid-beta peptide; the interaction is extremely stable in vitro but its physiological significance is unclear. May interact with MAPT. May interact with MAP2. In the cerebrospinal fluid, interacts with secreted SORL1. Interacts with PMEL; this allows the loading of PMEL luminal fragment on ILVs to induce fibril nucleation.</text>
</comment>
<comment type="subcellular location">
    <subcellularLocation>
        <location evidence="1">Secreted</location>
    </subcellularLocation>
    <subcellularLocation>
        <location evidence="1">Secreted</location>
        <location evidence="1">Extracellular space</location>
    </subcellularLocation>
    <subcellularLocation>
        <location evidence="1">Secreted</location>
        <location evidence="1">Extracellular space</location>
        <location evidence="1">Extracellular matrix</location>
    </subcellularLocation>
    <subcellularLocation>
        <location evidence="1">Extracellular vesicle</location>
    </subcellularLocation>
    <subcellularLocation>
        <location evidence="1">Endosome</location>
        <location evidence="1">Multivesicular body</location>
    </subcellularLocation>
    <text evidence="1">In the plasma, APOE is associated with chylomicrons, chylomicrons remnants, VLDL, LDL and HDL lipoproteins. Lipid poor oligomeric APOE is associated with the extracellular matrix in a calcium- and heparan-sulfate proteoglycans-dependent manner. Lipidation induces the release from the extracellular matrix. Colocalizes with CD63 and PMEL at exosomes and in intraluminal vesicles within multivesicular endosomes.</text>
</comment>
<comment type="PTM">
    <text evidence="1">APOE exists as multiple glycosylated and sialylated glycoforms within cells and in plasma. The extent of glycosylation and sialylation are tissue and context specific.</text>
</comment>
<comment type="PTM">
    <text evidence="1">Glycated in plasma VLDL.</text>
</comment>
<comment type="PTM">
    <text evidence="1">Phosphorylated by FAM20C in the extracellular medium.</text>
</comment>
<comment type="similarity">
    <text evidence="4">Belongs to the apolipoprotein A1/A4/E family.</text>
</comment>
<sequence>MKVLWAALLVTFLAGCQAKVEQPVEPETEPELRQQAEWQSGQPWELALGRFWDYLRWVQTLSEQVQEELLSPQVTQELTTLMDETMKELKAYKSELEEQLSPVAEETRARLSKELQAAQARLGADMEDVRSRLVQYRSELQAMLGQSTEELRARLASHLRKLRKRLLRDADDLQKRLAVYQAGAREGAERGVSAIRERLGPLVEQGRVRAATVGSLASQPLQERAQALGERLRARMEEMGSRTRDRLDEVKEQVAEVRAKLEEQAQQISLQAEAFQARLKSWFEPLVEDMQRQWAGLVEKVQAAVGASTAPVPSDNH</sequence>
<feature type="signal peptide" evidence="3">
    <location>
        <begin position="1"/>
        <end position="18"/>
    </location>
</feature>
<feature type="chain" id="PRO_0000448763" description="Apolipoprotein E">
    <location>
        <begin position="19"/>
        <end position="317"/>
    </location>
</feature>
<feature type="repeat" description="1">
    <location>
        <begin position="80"/>
        <end position="101"/>
    </location>
</feature>
<feature type="repeat" description="2">
    <location>
        <begin position="102"/>
        <end position="123"/>
    </location>
</feature>
<feature type="repeat" description="3">
    <location>
        <begin position="124"/>
        <end position="145"/>
    </location>
</feature>
<feature type="repeat" description="4">
    <location>
        <begin position="146"/>
        <end position="167"/>
    </location>
</feature>
<feature type="repeat" description="5">
    <location>
        <begin position="168"/>
        <end position="189"/>
    </location>
</feature>
<feature type="repeat" description="6">
    <location>
        <begin position="190"/>
        <end position="211"/>
    </location>
</feature>
<feature type="repeat" description="7">
    <location>
        <begin position="212"/>
        <end position="233"/>
    </location>
</feature>
<feature type="repeat" description="8">
    <location>
        <begin position="234"/>
        <end position="255"/>
    </location>
</feature>
<feature type="region of interest" description="8 X 22 AA approximate tandem repeats">
    <location>
        <begin position="80"/>
        <end position="255"/>
    </location>
</feature>
<feature type="region of interest" description="LDL and other lipoprotein receptors binding" evidence="1">
    <location>
        <begin position="158"/>
        <end position="168"/>
    </location>
</feature>
<feature type="region of interest" description="Lipid-binding and lipoprotein association" evidence="1">
    <location>
        <begin position="210"/>
        <end position="290"/>
    </location>
</feature>
<feature type="region of interest" description="Homooligomerization" evidence="1">
    <location>
        <begin position="266"/>
        <end position="317"/>
    </location>
</feature>
<feature type="region of interest" description="Specificity for association with VLDL" evidence="1">
    <location>
        <begin position="278"/>
        <end position="290"/>
    </location>
</feature>
<feature type="binding site" evidence="1">
    <location>
        <begin position="162"/>
        <end position="165"/>
    </location>
    <ligand>
        <name>heparin</name>
        <dbReference type="ChEBI" id="CHEBI:28304"/>
    </ligand>
</feature>
<feature type="binding site" evidence="1">
    <location>
        <begin position="229"/>
        <end position="236"/>
    </location>
    <ligand>
        <name>heparin</name>
        <dbReference type="ChEBI" id="CHEBI:28304"/>
    </ligand>
</feature>
<feature type="modified residue" description="Methionine sulfoxide" evidence="2">
    <location>
        <position position="143"/>
    </location>
</feature>
<feature type="modified residue" description="Phosphoserine" evidence="1">
    <location>
        <position position="147"/>
    </location>
</feature>
<accession>P0DTR8</accession>
<reference key="1">
    <citation type="submission" date="2015-03" db="EMBL/GenBank/DDBJ databases">
        <title>Whole genome of Theropithecus gelada.</title>
        <authorList>
            <person name="Chiou K.L."/>
            <person name="Snyder-Mackler N."/>
        </authorList>
    </citation>
    <scope>NUCLEOTIDE SEQUENCE [LARGE SCALE GENOMIC DNA]</scope>
    <source>
        <tissue>Blood</tissue>
    </source>
</reference>
<reference key="2">
    <citation type="unpublished observations" date="2019-10">
        <authorList>
            <person name="Puppione D.L."/>
        </authorList>
    </citation>
    <scope>IDENTIFICATION</scope>
</reference>
<organism>
    <name type="scientific">Theropithecus gelada</name>
    <name type="common">Gelada baboon</name>
    <dbReference type="NCBI Taxonomy" id="9565"/>
    <lineage>
        <taxon>Eukaryota</taxon>
        <taxon>Metazoa</taxon>
        <taxon>Chordata</taxon>
        <taxon>Craniata</taxon>
        <taxon>Vertebrata</taxon>
        <taxon>Euteleostomi</taxon>
        <taxon>Mammalia</taxon>
        <taxon>Eutheria</taxon>
        <taxon>Euarchontoglires</taxon>
        <taxon>Primates</taxon>
        <taxon>Haplorrhini</taxon>
        <taxon>Catarrhini</taxon>
        <taxon>Cercopithecidae</taxon>
        <taxon>Cercopithecinae</taxon>
        <taxon>Theropithecus</taxon>
    </lineage>
</organism>
<protein>
    <recommendedName>
        <fullName>Apolipoprotein E</fullName>
        <shortName>Apo-E</shortName>
    </recommendedName>
</protein>
<dbReference type="EMBL" id="CM009950">
    <property type="status" value="NOT_ANNOTATED_CDS"/>
    <property type="molecule type" value="Genomic_DNA"/>
</dbReference>
<dbReference type="SMR" id="P0DTR8"/>
<dbReference type="Ensembl" id="ENSTGET00000028742.1">
    <property type="protein sequence ID" value="ENSTGEP00000024097.1"/>
    <property type="gene ID" value="ENSTGEG00000019499.1"/>
</dbReference>
<dbReference type="Proteomes" id="UP000694411">
    <property type="component" value="Chromosome 19"/>
</dbReference>
<dbReference type="GO" id="GO:0042627">
    <property type="term" value="C:chylomicron"/>
    <property type="evidence" value="ECO:0007669"/>
    <property type="project" value="UniProtKB-KW"/>
</dbReference>
<dbReference type="GO" id="GO:0070062">
    <property type="term" value="C:extracellular exosome"/>
    <property type="evidence" value="ECO:0000250"/>
    <property type="project" value="UniProtKB"/>
</dbReference>
<dbReference type="GO" id="GO:0034364">
    <property type="term" value="C:high-density lipoprotein particle"/>
    <property type="evidence" value="ECO:0007669"/>
    <property type="project" value="UniProtKB-KW"/>
</dbReference>
<dbReference type="GO" id="GO:0034362">
    <property type="term" value="C:low-density lipoprotein particle"/>
    <property type="evidence" value="ECO:0007669"/>
    <property type="project" value="TreeGrafter"/>
</dbReference>
<dbReference type="GO" id="GO:0097487">
    <property type="term" value="C:multivesicular body, internal vesicle"/>
    <property type="evidence" value="ECO:0000250"/>
    <property type="project" value="UniProtKB"/>
</dbReference>
<dbReference type="GO" id="GO:0034361">
    <property type="term" value="C:very-low-density lipoprotein particle"/>
    <property type="evidence" value="ECO:0007669"/>
    <property type="project" value="UniProtKB-KW"/>
</dbReference>
<dbReference type="GO" id="GO:0120020">
    <property type="term" value="F:cholesterol transfer activity"/>
    <property type="evidence" value="ECO:0007669"/>
    <property type="project" value="TreeGrafter"/>
</dbReference>
<dbReference type="GO" id="GO:0008201">
    <property type="term" value="F:heparin binding"/>
    <property type="evidence" value="ECO:0007669"/>
    <property type="project" value="UniProtKB-KW"/>
</dbReference>
<dbReference type="GO" id="GO:0060228">
    <property type="term" value="F:phosphatidylcholine-sterol O-acyltransferase activator activity"/>
    <property type="evidence" value="ECO:0007669"/>
    <property type="project" value="TreeGrafter"/>
</dbReference>
<dbReference type="GO" id="GO:0005543">
    <property type="term" value="F:phospholipid binding"/>
    <property type="evidence" value="ECO:0007669"/>
    <property type="project" value="TreeGrafter"/>
</dbReference>
<dbReference type="GO" id="GO:0055090">
    <property type="term" value="P:acylglycerol homeostasis"/>
    <property type="evidence" value="ECO:0007669"/>
    <property type="project" value="TreeGrafter"/>
</dbReference>
<dbReference type="GO" id="GO:0033344">
    <property type="term" value="P:cholesterol efflux"/>
    <property type="evidence" value="ECO:0007669"/>
    <property type="project" value="TreeGrafter"/>
</dbReference>
<dbReference type="GO" id="GO:0008203">
    <property type="term" value="P:cholesterol metabolic process"/>
    <property type="evidence" value="ECO:0007669"/>
    <property type="project" value="TreeGrafter"/>
</dbReference>
<dbReference type="GO" id="GO:0042157">
    <property type="term" value="P:lipoprotein metabolic process"/>
    <property type="evidence" value="ECO:0007669"/>
    <property type="project" value="InterPro"/>
</dbReference>
<dbReference type="GO" id="GO:0032438">
    <property type="term" value="P:melanosome organization"/>
    <property type="evidence" value="ECO:0000250"/>
    <property type="project" value="UniProtKB"/>
</dbReference>
<dbReference type="GO" id="GO:0033700">
    <property type="term" value="P:phospholipid efflux"/>
    <property type="evidence" value="ECO:0007669"/>
    <property type="project" value="TreeGrafter"/>
</dbReference>
<dbReference type="FunFam" id="1.20.120.20:FF:000002">
    <property type="entry name" value="Apolipoprotein E"/>
    <property type="match status" value="1"/>
</dbReference>
<dbReference type="FunFam" id="1.20.120.20:FF:000003">
    <property type="entry name" value="Apolipoprotein E"/>
    <property type="match status" value="1"/>
</dbReference>
<dbReference type="Gene3D" id="1.20.120.20">
    <property type="entry name" value="Apolipoprotein"/>
    <property type="match status" value="2"/>
</dbReference>
<dbReference type="InterPro" id="IPR000074">
    <property type="entry name" value="ApoA_E"/>
</dbReference>
<dbReference type="InterPro" id="IPR050163">
    <property type="entry name" value="Apolipoprotein_A1/A4/E"/>
</dbReference>
<dbReference type="PANTHER" id="PTHR18976">
    <property type="entry name" value="APOLIPOPROTEIN"/>
    <property type="match status" value="1"/>
</dbReference>
<dbReference type="PANTHER" id="PTHR18976:SF2">
    <property type="entry name" value="APOLIPOPROTEIN E"/>
    <property type="match status" value="1"/>
</dbReference>
<dbReference type="Pfam" id="PF01442">
    <property type="entry name" value="Apolipoprotein"/>
    <property type="match status" value="1"/>
</dbReference>
<dbReference type="SUPFAM" id="SSF58113">
    <property type="entry name" value="Apolipoprotein A-I"/>
    <property type="match status" value="1"/>
</dbReference>
<keyword id="KW-0162">Chylomicron</keyword>
<keyword id="KW-0967">Endosome</keyword>
<keyword id="KW-0272">Extracellular matrix</keyword>
<keyword id="KW-0325">Glycoprotein</keyword>
<keyword id="KW-0345">HDL</keyword>
<keyword id="KW-0358">Heparin-binding</keyword>
<keyword id="KW-0445">Lipid transport</keyword>
<keyword id="KW-0446">Lipid-binding</keyword>
<keyword id="KW-0558">Oxidation</keyword>
<keyword id="KW-0597">Phosphoprotein</keyword>
<keyword id="KW-1185">Reference proteome</keyword>
<keyword id="KW-0677">Repeat</keyword>
<keyword id="KW-0964">Secreted</keyword>
<keyword id="KW-0732">Signal</keyword>
<keyword id="KW-0813">Transport</keyword>
<keyword id="KW-0850">VLDL</keyword>
<gene>
    <name type="primary">APOE</name>
</gene>
<evidence type="ECO:0000250" key="1">
    <source>
        <dbReference type="UniProtKB" id="P02649"/>
    </source>
</evidence>
<evidence type="ECO:0000250" key="2">
    <source>
        <dbReference type="UniProtKB" id="P08226"/>
    </source>
</evidence>
<evidence type="ECO:0000255" key="3"/>
<evidence type="ECO:0000305" key="4"/>
<proteinExistence type="inferred from homology"/>